<sequence length="689" mass="77712">MQNIDLISEEEAQKLLEELADKIAAYNHAYYIEDNPLVSDSEYDQLFNTNLKLEQKFPHLILENSPSKKVGAKIANKFAKVTHQVPMLSLSNAFDEQDVRDFVDRIKIFLRLNEFAPIFCEPKIDGLSFSAVYKHGVLTTGATRGDGYVGEDITANIKTIKNFPHKIDNVPEFLEVRGEIYIEKQDFLNLNKEQDEQGKDKFANPRNAAAGSLRQLDSSITAKRPLKYFVYSGGVTEQNLASSQDQLLTKLKECGFNINEISKLASSEEEIFAFYEYLKTNRENLPYEIDGVVYKLNDFVLQNRMGFIARSPRFATAHKFPAIIGQTKLLSITVQVGRTGTLTPVAELEPIEIGGVTVSRATLHNFQEIARKDLRIKDYVFLQRAGDVIPKIMGVDFDKRPNDTETFDTPLFCLSCNSKLHYTPEDIIIRCDNGLNCPAQNYERIRHFVSKNAMDIEGLGRKQVEFLIDKGLISNPLDIFFLKEKNDSSLAKLENMDGWGKKSVENLFKNIEKSKNVSLPRFIYALGIRHIGEQNAKLLAREFGSYNNFIAQMELLRTNEPDIYQKLNNLEGIGDKILVDIIDFFDVKENIELIKKLGGILNIEDYKETREQSSLTDKIVVFTGSLSTISRAEAKATAEKLGAKVAVGVSSNTDLVVAGVGAGSKLKKAKELNIKIIDEEEWLTLIKNV</sequence>
<organism>
    <name type="scientific">Rickettsia africae (strain ESF-5)</name>
    <dbReference type="NCBI Taxonomy" id="347255"/>
    <lineage>
        <taxon>Bacteria</taxon>
        <taxon>Pseudomonadati</taxon>
        <taxon>Pseudomonadota</taxon>
        <taxon>Alphaproteobacteria</taxon>
        <taxon>Rickettsiales</taxon>
        <taxon>Rickettsiaceae</taxon>
        <taxon>Rickettsieae</taxon>
        <taxon>Rickettsia</taxon>
        <taxon>spotted fever group</taxon>
    </lineage>
</organism>
<evidence type="ECO:0000255" key="1">
    <source>
        <dbReference type="HAMAP-Rule" id="MF_01588"/>
    </source>
</evidence>
<reference key="1">
    <citation type="journal article" date="2009" name="BMC Genomics">
        <title>Analysis of the Rickettsia africae genome reveals that virulence acquisition in Rickettsia species may be explained by genome reduction.</title>
        <authorList>
            <person name="Fournier P.-E."/>
            <person name="El Karkouri K."/>
            <person name="Leroy Q."/>
            <person name="Robert C."/>
            <person name="Giumelli B."/>
            <person name="Renesto P."/>
            <person name="Socolovschi C."/>
            <person name="Parola P."/>
            <person name="Audic S."/>
            <person name="Raoult D."/>
        </authorList>
    </citation>
    <scope>NUCLEOTIDE SEQUENCE [LARGE SCALE GENOMIC DNA]</scope>
    <source>
        <strain>ESF-5</strain>
    </source>
</reference>
<dbReference type="EC" id="6.5.1.2" evidence="1"/>
<dbReference type="EMBL" id="CP001612">
    <property type="protein sequence ID" value="ACP53832.1"/>
    <property type="molecule type" value="Genomic_DNA"/>
</dbReference>
<dbReference type="RefSeq" id="WP_012719973.1">
    <property type="nucleotide sequence ID" value="NC_012633.1"/>
</dbReference>
<dbReference type="SMR" id="C3PLJ2"/>
<dbReference type="KEGG" id="raf:RAF_ORF1003"/>
<dbReference type="HOGENOM" id="CLU_007764_2_1_5"/>
<dbReference type="Proteomes" id="UP000002305">
    <property type="component" value="Chromosome"/>
</dbReference>
<dbReference type="GO" id="GO:0005829">
    <property type="term" value="C:cytosol"/>
    <property type="evidence" value="ECO:0007669"/>
    <property type="project" value="TreeGrafter"/>
</dbReference>
<dbReference type="GO" id="GO:0003911">
    <property type="term" value="F:DNA ligase (NAD+) activity"/>
    <property type="evidence" value="ECO:0007669"/>
    <property type="project" value="UniProtKB-UniRule"/>
</dbReference>
<dbReference type="GO" id="GO:0046872">
    <property type="term" value="F:metal ion binding"/>
    <property type="evidence" value="ECO:0007669"/>
    <property type="project" value="UniProtKB-KW"/>
</dbReference>
<dbReference type="GO" id="GO:0006281">
    <property type="term" value="P:DNA repair"/>
    <property type="evidence" value="ECO:0007669"/>
    <property type="project" value="UniProtKB-KW"/>
</dbReference>
<dbReference type="GO" id="GO:0006260">
    <property type="term" value="P:DNA replication"/>
    <property type="evidence" value="ECO:0007669"/>
    <property type="project" value="UniProtKB-KW"/>
</dbReference>
<dbReference type="CDD" id="cd17748">
    <property type="entry name" value="BRCT_DNA_ligase_like"/>
    <property type="match status" value="1"/>
</dbReference>
<dbReference type="CDD" id="cd00114">
    <property type="entry name" value="LIGANc"/>
    <property type="match status" value="1"/>
</dbReference>
<dbReference type="FunFam" id="1.10.150.20:FF:000007">
    <property type="entry name" value="DNA ligase"/>
    <property type="match status" value="1"/>
</dbReference>
<dbReference type="FunFam" id="2.40.50.140:FF:000012">
    <property type="entry name" value="DNA ligase"/>
    <property type="match status" value="1"/>
</dbReference>
<dbReference type="FunFam" id="3.30.470.30:FF:000001">
    <property type="entry name" value="DNA ligase"/>
    <property type="match status" value="1"/>
</dbReference>
<dbReference type="Gene3D" id="1.10.150.20">
    <property type="entry name" value="5' to 3' exonuclease, C-terminal subdomain"/>
    <property type="match status" value="2"/>
</dbReference>
<dbReference type="Gene3D" id="3.40.50.10190">
    <property type="entry name" value="BRCT domain"/>
    <property type="match status" value="1"/>
</dbReference>
<dbReference type="Gene3D" id="3.30.470.30">
    <property type="entry name" value="DNA ligase/mRNA capping enzyme"/>
    <property type="match status" value="1"/>
</dbReference>
<dbReference type="Gene3D" id="1.10.287.610">
    <property type="entry name" value="Helix hairpin bin"/>
    <property type="match status" value="1"/>
</dbReference>
<dbReference type="Gene3D" id="2.40.50.140">
    <property type="entry name" value="Nucleic acid-binding proteins"/>
    <property type="match status" value="1"/>
</dbReference>
<dbReference type="HAMAP" id="MF_01588">
    <property type="entry name" value="DNA_ligase_A"/>
    <property type="match status" value="1"/>
</dbReference>
<dbReference type="InterPro" id="IPR001357">
    <property type="entry name" value="BRCT_dom"/>
</dbReference>
<dbReference type="InterPro" id="IPR036420">
    <property type="entry name" value="BRCT_dom_sf"/>
</dbReference>
<dbReference type="InterPro" id="IPR041663">
    <property type="entry name" value="DisA/LigA_HHH"/>
</dbReference>
<dbReference type="InterPro" id="IPR001679">
    <property type="entry name" value="DNA_ligase"/>
</dbReference>
<dbReference type="InterPro" id="IPR018239">
    <property type="entry name" value="DNA_ligase_AS"/>
</dbReference>
<dbReference type="InterPro" id="IPR033136">
    <property type="entry name" value="DNA_ligase_CS"/>
</dbReference>
<dbReference type="InterPro" id="IPR013839">
    <property type="entry name" value="DNAligase_adenylation"/>
</dbReference>
<dbReference type="InterPro" id="IPR013840">
    <property type="entry name" value="DNAligase_N"/>
</dbReference>
<dbReference type="InterPro" id="IPR012340">
    <property type="entry name" value="NA-bd_OB-fold"/>
</dbReference>
<dbReference type="InterPro" id="IPR004150">
    <property type="entry name" value="NAD_DNA_ligase_OB"/>
</dbReference>
<dbReference type="InterPro" id="IPR010994">
    <property type="entry name" value="RuvA_2-like"/>
</dbReference>
<dbReference type="NCBIfam" id="TIGR00575">
    <property type="entry name" value="dnlj"/>
    <property type="match status" value="1"/>
</dbReference>
<dbReference type="NCBIfam" id="NF005932">
    <property type="entry name" value="PRK07956.1"/>
    <property type="match status" value="1"/>
</dbReference>
<dbReference type="PANTHER" id="PTHR23389">
    <property type="entry name" value="CHROMOSOME TRANSMISSION FIDELITY FACTOR 18"/>
    <property type="match status" value="1"/>
</dbReference>
<dbReference type="PANTHER" id="PTHR23389:SF9">
    <property type="entry name" value="DNA LIGASE"/>
    <property type="match status" value="1"/>
</dbReference>
<dbReference type="Pfam" id="PF00533">
    <property type="entry name" value="BRCT"/>
    <property type="match status" value="1"/>
</dbReference>
<dbReference type="Pfam" id="PF01653">
    <property type="entry name" value="DNA_ligase_aden"/>
    <property type="match status" value="1"/>
</dbReference>
<dbReference type="Pfam" id="PF03120">
    <property type="entry name" value="DNA_ligase_OB"/>
    <property type="match status" value="1"/>
</dbReference>
<dbReference type="Pfam" id="PF12826">
    <property type="entry name" value="HHH_2"/>
    <property type="match status" value="1"/>
</dbReference>
<dbReference type="PIRSF" id="PIRSF001604">
    <property type="entry name" value="LigA"/>
    <property type="match status" value="1"/>
</dbReference>
<dbReference type="SMART" id="SM00292">
    <property type="entry name" value="BRCT"/>
    <property type="match status" value="1"/>
</dbReference>
<dbReference type="SMART" id="SM00532">
    <property type="entry name" value="LIGANc"/>
    <property type="match status" value="1"/>
</dbReference>
<dbReference type="SUPFAM" id="SSF52113">
    <property type="entry name" value="BRCT domain"/>
    <property type="match status" value="1"/>
</dbReference>
<dbReference type="SUPFAM" id="SSF56091">
    <property type="entry name" value="DNA ligase/mRNA capping enzyme, catalytic domain"/>
    <property type="match status" value="1"/>
</dbReference>
<dbReference type="SUPFAM" id="SSF50249">
    <property type="entry name" value="Nucleic acid-binding proteins"/>
    <property type="match status" value="1"/>
</dbReference>
<dbReference type="SUPFAM" id="SSF47781">
    <property type="entry name" value="RuvA domain 2-like"/>
    <property type="match status" value="1"/>
</dbReference>
<dbReference type="PROSITE" id="PS50172">
    <property type="entry name" value="BRCT"/>
    <property type="match status" value="1"/>
</dbReference>
<dbReference type="PROSITE" id="PS01055">
    <property type="entry name" value="DNA_LIGASE_N1"/>
    <property type="match status" value="1"/>
</dbReference>
<dbReference type="PROSITE" id="PS01056">
    <property type="entry name" value="DNA_LIGASE_N2"/>
    <property type="match status" value="1"/>
</dbReference>
<gene>
    <name evidence="1" type="primary">ligA</name>
    <name type="ordered locus">RAF_ORF1003</name>
</gene>
<proteinExistence type="inferred from homology"/>
<protein>
    <recommendedName>
        <fullName evidence="1">DNA ligase</fullName>
        <ecNumber evidence="1">6.5.1.2</ecNumber>
    </recommendedName>
    <alternativeName>
        <fullName evidence="1">Polydeoxyribonucleotide synthase [NAD(+)]</fullName>
    </alternativeName>
</protein>
<name>DNLJ_RICAE</name>
<feature type="chain" id="PRO_0000380459" description="DNA ligase">
    <location>
        <begin position="1"/>
        <end position="689"/>
    </location>
</feature>
<feature type="domain" description="BRCT" evidence="1">
    <location>
        <begin position="610"/>
        <end position="689"/>
    </location>
</feature>
<feature type="active site" description="N6-AMP-lysine intermediate" evidence="1">
    <location>
        <position position="123"/>
    </location>
</feature>
<feature type="binding site" evidence="1">
    <location>
        <begin position="40"/>
        <end position="44"/>
    </location>
    <ligand>
        <name>NAD(+)</name>
        <dbReference type="ChEBI" id="CHEBI:57540"/>
    </ligand>
</feature>
<feature type="binding site" evidence="1">
    <location>
        <begin position="89"/>
        <end position="90"/>
    </location>
    <ligand>
        <name>NAD(+)</name>
        <dbReference type="ChEBI" id="CHEBI:57540"/>
    </ligand>
</feature>
<feature type="binding site" evidence="1">
    <location>
        <position position="121"/>
    </location>
    <ligand>
        <name>NAD(+)</name>
        <dbReference type="ChEBI" id="CHEBI:57540"/>
    </ligand>
</feature>
<feature type="binding site" evidence="1">
    <location>
        <position position="144"/>
    </location>
    <ligand>
        <name>NAD(+)</name>
        <dbReference type="ChEBI" id="CHEBI:57540"/>
    </ligand>
</feature>
<feature type="binding site" evidence="1">
    <location>
        <position position="179"/>
    </location>
    <ligand>
        <name>NAD(+)</name>
        <dbReference type="ChEBI" id="CHEBI:57540"/>
    </ligand>
</feature>
<feature type="binding site" evidence="1">
    <location>
        <position position="295"/>
    </location>
    <ligand>
        <name>NAD(+)</name>
        <dbReference type="ChEBI" id="CHEBI:57540"/>
    </ligand>
</feature>
<feature type="binding site" evidence="1">
    <location>
        <position position="319"/>
    </location>
    <ligand>
        <name>NAD(+)</name>
        <dbReference type="ChEBI" id="CHEBI:57540"/>
    </ligand>
</feature>
<feature type="binding site" evidence="1">
    <location>
        <position position="413"/>
    </location>
    <ligand>
        <name>Zn(2+)</name>
        <dbReference type="ChEBI" id="CHEBI:29105"/>
    </ligand>
</feature>
<feature type="binding site" evidence="1">
    <location>
        <position position="416"/>
    </location>
    <ligand>
        <name>Zn(2+)</name>
        <dbReference type="ChEBI" id="CHEBI:29105"/>
    </ligand>
</feature>
<feature type="binding site" evidence="1">
    <location>
        <position position="431"/>
    </location>
    <ligand>
        <name>Zn(2+)</name>
        <dbReference type="ChEBI" id="CHEBI:29105"/>
    </ligand>
</feature>
<feature type="binding site" evidence="1">
    <location>
        <position position="437"/>
    </location>
    <ligand>
        <name>Zn(2+)</name>
        <dbReference type="ChEBI" id="CHEBI:29105"/>
    </ligand>
</feature>
<keyword id="KW-0227">DNA damage</keyword>
<keyword id="KW-0234">DNA repair</keyword>
<keyword id="KW-0235">DNA replication</keyword>
<keyword id="KW-0436">Ligase</keyword>
<keyword id="KW-0460">Magnesium</keyword>
<keyword id="KW-0464">Manganese</keyword>
<keyword id="KW-0479">Metal-binding</keyword>
<keyword id="KW-0520">NAD</keyword>
<keyword id="KW-0862">Zinc</keyword>
<comment type="function">
    <text evidence="1">DNA ligase that catalyzes the formation of phosphodiester linkages between 5'-phosphoryl and 3'-hydroxyl groups in double-stranded DNA using NAD as a coenzyme and as the energy source for the reaction. It is essential for DNA replication and repair of damaged DNA.</text>
</comment>
<comment type="catalytic activity">
    <reaction evidence="1">
        <text>NAD(+) + (deoxyribonucleotide)n-3'-hydroxyl + 5'-phospho-(deoxyribonucleotide)m = (deoxyribonucleotide)n+m + AMP + beta-nicotinamide D-nucleotide.</text>
        <dbReference type="EC" id="6.5.1.2"/>
    </reaction>
</comment>
<comment type="cofactor">
    <cofactor evidence="1">
        <name>Mg(2+)</name>
        <dbReference type="ChEBI" id="CHEBI:18420"/>
    </cofactor>
    <cofactor evidence="1">
        <name>Mn(2+)</name>
        <dbReference type="ChEBI" id="CHEBI:29035"/>
    </cofactor>
</comment>
<comment type="similarity">
    <text evidence="1">Belongs to the NAD-dependent DNA ligase family. LigA subfamily.</text>
</comment>
<accession>C3PLJ2</accession>